<sequence>MAKYIAQIIVLGAQAVGRAFTKALRQEIAASQEAARRAGGGKQGDKSAESNLRTGMTLEEAKQILNIDDPKNVDAITKNYEHLFQVNERSKGGSFYIQSKVFRAKERLDHEIKAHEQPRSSNTEAAQDTAEESQSRSRQRR</sequence>
<organism>
    <name type="scientific">Drosophila melanogaster</name>
    <name type="common">Fruit fly</name>
    <dbReference type="NCBI Taxonomy" id="7227"/>
    <lineage>
        <taxon>Eukaryota</taxon>
        <taxon>Metazoa</taxon>
        <taxon>Ecdysozoa</taxon>
        <taxon>Arthropoda</taxon>
        <taxon>Hexapoda</taxon>
        <taxon>Insecta</taxon>
        <taxon>Pterygota</taxon>
        <taxon>Neoptera</taxon>
        <taxon>Endopterygota</taxon>
        <taxon>Diptera</taxon>
        <taxon>Brachycera</taxon>
        <taxon>Muscomorpha</taxon>
        <taxon>Ephydroidea</taxon>
        <taxon>Drosophilidae</taxon>
        <taxon>Drosophila</taxon>
        <taxon>Sophophora</taxon>
    </lineage>
</organism>
<proteinExistence type="evidence at transcript level"/>
<evidence type="ECO:0000250" key="1"/>
<evidence type="ECO:0000256" key="2">
    <source>
        <dbReference type="SAM" id="MobiDB-lite"/>
    </source>
</evidence>
<evidence type="ECO:0000269" key="3">
    <source>
    </source>
</evidence>
<evidence type="ECO:0000305" key="4"/>
<gene>
    <name type="primary">blp</name>
    <name type="ORF">CG5268</name>
</gene>
<keyword id="KW-0217">Developmental protein</keyword>
<keyword id="KW-0472">Membrane</keyword>
<keyword id="KW-0496">Mitochondrion</keyword>
<keyword id="KW-0999">Mitochondrion inner membrane</keyword>
<keyword id="KW-0653">Protein transport</keyword>
<keyword id="KW-1185">Reference proteome</keyword>
<keyword id="KW-0811">Translocation</keyword>
<keyword id="KW-0813">Transport</keyword>
<comment type="function">
    <text evidence="1 3">Regulates ATP-dependent protein translocation into the mitochondrial matrix (By similarity). Essential for larval development.</text>
</comment>
<comment type="subunit">
    <text evidence="1">Probable component of the PAM complex at least composed of a mitochondrial HSP70 protein, Roe1, TIM44, blp/TIM16 and TIM14. Associates with the TIM23 complex.</text>
</comment>
<comment type="subcellular location">
    <subcellularLocation>
        <location evidence="1">Mitochondrion inner membrane</location>
        <topology evidence="1">Peripheral membrane protein</topology>
        <orientation evidence="1">Matrix side</orientation>
    </subcellularLocation>
</comment>
<comment type="tissue specificity">
    <text evidence="3">Expressed in distinct cells in the embryonic and larval nervous system.</text>
</comment>
<comment type="developmental stage">
    <text evidence="3">Highly expressed in early embryos.</text>
</comment>
<comment type="domain">
    <text evidence="1">The J-like region, although related to the J domain does not have co-chaperone activity.</text>
</comment>
<comment type="similarity">
    <text evidence="4">Belongs to the TIM16/PAM16 family.</text>
</comment>
<reference key="1">
    <citation type="journal article" date="2001" name="Gene">
        <title>The black-pearl gene of Drosophila defines a novel conserved protein family and is required for early larval survival.</title>
        <authorList>
            <person name="Becker S."/>
            <person name="Gehrsitz A."/>
            <person name="Bork P."/>
            <person name="Buchner S."/>
            <person name="Buchner E."/>
        </authorList>
    </citation>
    <scope>NUCLEOTIDE SEQUENCE [MRNA]</scope>
    <scope>FUNCTION</scope>
    <scope>TISSUE SPECIFICITY</scope>
    <scope>DEVELOPMENTAL STAGE</scope>
    <source>
        <tissue>Embryo</tissue>
    </source>
</reference>
<reference key="2">
    <citation type="journal article" date="2000" name="Science">
        <title>The genome sequence of Drosophila melanogaster.</title>
        <authorList>
            <person name="Adams M.D."/>
            <person name="Celniker S.E."/>
            <person name="Holt R.A."/>
            <person name="Evans C.A."/>
            <person name="Gocayne J.D."/>
            <person name="Amanatides P.G."/>
            <person name="Scherer S.E."/>
            <person name="Li P.W."/>
            <person name="Hoskins R.A."/>
            <person name="Galle R.F."/>
            <person name="George R.A."/>
            <person name="Lewis S.E."/>
            <person name="Richards S."/>
            <person name="Ashburner M."/>
            <person name="Henderson S.N."/>
            <person name="Sutton G.G."/>
            <person name="Wortman J.R."/>
            <person name="Yandell M.D."/>
            <person name="Zhang Q."/>
            <person name="Chen L.X."/>
            <person name="Brandon R.C."/>
            <person name="Rogers Y.-H.C."/>
            <person name="Blazej R.G."/>
            <person name="Champe M."/>
            <person name="Pfeiffer B.D."/>
            <person name="Wan K.H."/>
            <person name="Doyle C."/>
            <person name="Baxter E.G."/>
            <person name="Helt G."/>
            <person name="Nelson C.R."/>
            <person name="Miklos G.L.G."/>
            <person name="Abril J.F."/>
            <person name="Agbayani A."/>
            <person name="An H.-J."/>
            <person name="Andrews-Pfannkoch C."/>
            <person name="Baldwin D."/>
            <person name="Ballew R.M."/>
            <person name="Basu A."/>
            <person name="Baxendale J."/>
            <person name="Bayraktaroglu L."/>
            <person name="Beasley E.M."/>
            <person name="Beeson K.Y."/>
            <person name="Benos P.V."/>
            <person name="Berman B.P."/>
            <person name="Bhandari D."/>
            <person name="Bolshakov S."/>
            <person name="Borkova D."/>
            <person name="Botchan M.R."/>
            <person name="Bouck J."/>
            <person name="Brokstein P."/>
            <person name="Brottier P."/>
            <person name="Burtis K.C."/>
            <person name="Busam D.A."/>
            <person name="Butler H."/>
            <person name="Cadieu E."/>
            <person name="Center A."/>
            <person name="Chandra I."/>
            <person name="Cherry J.M."/>
            <person name="Cawley S."/>
            <person name="Dahlke C."/>
            <person name="Davenport L.B."/>
            <person name="Davies P."/>
            <person name="de Pablos B."/>
            <person name="Delcher A."/>
            <person name="Deng Z."/>
            <person name="Mays A.D."/>
            <person name="Dew I."/>
            <person name="Dietz S.M."/>
            <person name="Dodson K."/>
            <person name="Doup L.E."/>
            <person name="Downes M."/>
            <person name="Dugan-Rocha S."/>
            <person name="Dunkov B.C."/>
            <person name="Dunn P."/>
            <person name="Durbin K.J."/>
            <person name="Evangelista C.C."/>
            <person name="Ferraz C."/>
            <person name="Ferriera S."/>
            <person name="Fleischmann W."/>
            <person name="Fosler C."/>
            <person name="Gabrielian A.E."/>
            <person name="Garg N.S."/>
            <person name="Gelbart W.M."/>
            <person name="Glasser K."/>
            <person name="Glodek A."/>
            <person name="Gong F."/>
            <person name="Gorrell J.H."/>
            <person name="Gu Z."/>
            <person name="Guan P."/>
            <person name="Harris M."/>
            <person name="Harris N.L."/>
            <person name="Harvey D.A."/>
            <person name="Heiman T.J."/>
            <person name="Hernandez J.R."/>
            <person name="Houck J."/>
            <person name="Hostin D."/>
            <person name="Houston K.A."/>
            <person name="Howland T.J."/>
            <person name="Wei M.-H."/>
            <person name="Ibegwam C."/>
            <person name="Jalali M."/>
            <person name="Kalush F."/>
            <person name="Karpen G.H."/>
            <person name="Ke Z."/>
            <person name="Kennison J.A."/>
            <person name="Ketchum K.A."/>
            <person name="Kimmel B.E."/>
            <person name="Kodira C.D."/>
            <person name="Kraft C.L."/>
            <person name="Kravitz S."/>
            <person name="Kulp D."/>
            <person name="Lai Z."/>
            <person name="Lasko P."/>
            <person name="Lei Y."/>
            <person name="Levitsky A.A."/>
            <person name="Li J.H."/>
            <person name="Li Z."/>
            <person name="Liang Y."/>
            <person name="Lin X."/>
            <person name="Liu X."/>
            <person name="Mattei B."/>
            <person name="McIntosh T.C."/>
            <person name="McLeod M.P."/>
            <person name="McPherson D."/>
            <person name="Merkulov G."/>
            <person name="Milshina N.V."/>
            <person name="Mobarry C."/>
            <person name="Morris J."/>
            <person name="Moshrefi A."/>
            <person name="Mount S.M."/>
            <person name="Moy M."/>
            <person name="Murphy B."/>
            <person name="Murphy L."/>
            <person name="Muzny D.M."/>
            <person name="Nelson D.L."/>
            <person name="Nelson D.R."/>
            <person name="Nelson K.A."/>
            <person name="Nixon K."/>
            <person name="Nusskern D.R."/>
            <person name="Pacleb J.M."/>
            <person name="Palazzolo M."/>
            <person name="Pittman G.S."/>
            <person name="Pan S."/>
            <person name="Pollard J."/>
            <person name="Puri V."/>
            <person name="Reese M.G."/>
            <person name="Reinert K."/>
            <person name="Remington K."/>
            <person name="Saunders R.D.C."/>
            <person name="Scheeler F."/>
            <person name="Shen H."/>
            <person name="Shue B.C."/>
            <person name="Siden-Kiamos I."/>
            <person name="Simpson M."/>
            <person name="Skupski M.P."/>
            <person name="Smith T.J."/>
            <person name="Spier E."/>
            <person name="Spradling A.C."/>
            <person name="Stapleton M."/>
            <person name="Strong R."/>
            <person name="Sun E."/>
            <person name="Svirskas R."/>
            <person name="Tector C."/>
            <person name="Turner R."/>
            <person name="Venter E."/>
            <person name="Wang A.H."/>
            <person name="Wang X."/>
            <person name="Wang Z.-Y."/>
            <person name="Wassarman D.A."/>
            <person name="Weinstock G.M."/>
            <person name="Weissenbach J."/>
            <person name="Williams S.M."/>
            <person name="Woodage T."/>
            <person name="Worley K.C."/>
            <person name="Wu D."/>
            <person name="Yang S."/>
            <person name="Yao Q.A."/>
            <person name="Ye J."/>
            <person name="Yeh R.-F."/>
            <person name="Zaveri J.S."/>
            <person name="Zhan M."/>
            <person name="Zhang G."/>
            <person name="Zhao Q."/>
            <person name="Zheng L."/>
            <person name="Zheng X.H."/>
            <person name="Zhong F.N."/>
            <person name="Zhong W."/>
            <person name="Zhou X."/>
            <person name="Zhu S.C."/>
            <person name="Zhu X."/>
            <person name="Smith H.O."/>
            <person name="Gibbs R.A."/>
            <person name="Myers E.W."/>
            <person name="Rubin G.M."/>
            <person name="Venter J.C."/>
        </authorList>
    </citation>
    <scope>NUCLEOTIDE SEQUENCE [LARGE SCALE GENOMIC DNA]</scope>
    <source>
        <strain>Berkeley</strain>
    </source>
</reference>
<reference key="3">
    <citation type="journal article" date="2002" name="Genome Biol.">
        <title>Annotation of the Drosophila melanogaster euchromatic genome: a systematic review.</title>
        <authorList>
            <person name="Misra S."/>
            <person name="Crosby M.A."/>
            <person name="Mungall C.J."/>
            <person name="Matthews B.B."/>
            <person name="Campbell K.S."/>
            <person name="Hradecky P."/>
            <person name="Huang Y."/>
            <person name="Kaminker J.S."/>
            <person name="Millburn G.H."/>
            <person name="Prochnik S.E."/>
            <person name="Smith C.D."/>
            <person name="Tupy J.L."/>
            <person name="Whitfield E.J."/>
            <person name="Bayraktaroglu L."/>
            <person name="Berman B.P."/>
            <person name="Bettencourt B.R."/>
            <person name="Celniker S.E."/>
            <person name="de Grey A.D.N.J."/>
            <person name="Drysdale R.A."/>
            <person name="Harris N.L."/>
            <person name="Richter J."/>
            <person name="Russo S."/>
            <person name="Schroeder A.J."/>
            <person name="Shu S.Q."/>
            <person name="Stapleton M."/>
            <person name="Yamada C."/>
            <person name="Ashburner M."/>
            <person name="Gelbart W.M."/>
            <person name="Rubin G.M."/>
            <person name="Lewis S.E."/>
        </authorList>
    </citation>
    <scope>GENOME REANNOTATION</scope>
    <source>
        <strain>Berkeley</strain>
    </source>
</reference>
<reference key="4">
    <citation type="journal article" date="2002" name="Genome Biol.">
        <title>A Drosophila full-length cDNA resource.</title>
        <authorList>
            <person name="Stapleton M."/>
            <person name="Carlson J.W."/>
            <person name="Brokstein P."/>
            <person name="Yu C."/>
            <person name="Champe M."/>
            <person name="George R.A."/>
            <person name="Guarin H."/>
            <person name="Kronmiller B."/>
            <person name="Pacleb J.M."/>
            <person name="Park S."/>
            <person name="Wan K.H."/>
            <person name="Rubin G.M."/>
            <person name="Celniker S.E."/>
        </authorList>
    </citation>
    <scope>NUCLEOTIDE SEQUENCE [LARGE SCALE MRNA]</scope>
    <source>
        <strain>Berkeley</strain>
        <tissue>Embryo</tissue>
    </source>
</reference>
<name>TIM16_DROME</name>
<accession>Q9VF08</accession>
<accession>Q9GP65</accession>
<feature type="chain" id="PRO_0000214087" description="Mitochondrial import inner membrane translocase subunit Tim16">
    <location>
        <begin position="1"/>
        <end position="141"/>
    </location>
</feature>
<feature type="region of interest" description="Disordered" evidence="2">
    <location>
        <begin position="34"/>
        <end position="53"/>
    </location>
</feature>
<feature type="region of interest" description="J-like">
    <location>
        <begin position="60"/>
        <end position="113"/>
    </location>
</feature>
<feature type="region of interest" description="Disordered" evidence="2">
    <location>
        <begin position="108"/>
        <end position="141"/>
    </location>
</feature>
<feature type="compositionally biased region" description="Basic and acidic residues" evidence="2">
    <location>
        <begin position="108"/>
        <end position="118"/>
    </location>
</feature>
<feature type="sequence conflict" description="In Ref. 1; CAC20095." evidence="4" ref="1">
    <original>A</original>
    <variation>V</variation>
    <location>
        <position position="35"/>
    </location>
</feature>
<feature type="sequence conflict" description="In Ref. 1; CAC20095." evidence="4" ref="1">
    <original>QVN</original>
    <variation>HVI</variation>
    <location>
        <begin position="85"/>
        <end position="87"/>
    </location>
</feature>
<protein>
    <recommendedName>
        <fullName>Mitochondrial import inner membrane translocase subunit Tim16</fullName>
    </recommendedName>
    <alternativeName>
        <fullName>Protein black pearl</fullName>
    </alternativeName>
</protein>
<dbReference type="EMBL" id="AJ278732">
    <property type="protein sequence ID" value="CAC20095.1"/>
    <property type="molecule type" value="mRNA"/>
</dbReference>
<dbReference type="EMBL" id="AE014297">
    <property type="protein sequence ID" value="AAF55254.1"/>
    <property type="molecule type" value="Genomic_DNA"/>
</dbReference>
<dbReference type="EMBL" id="AY071034">
    <property type="protein sequence ID" value="AAL48656.1"/>
    <property type="molecule type" value="mRNA"/>
</dbReference>
<dbReference type="RefSeq" id="NP_001287349.1">
    <property type="nucleotide sequence ID" value="NM_001300420.1"/>
</dbReference>
<dbReference type="RefSeq" id="NP_524370.2">
    <property type="nucleotide sequence ID" value="NM_079646.4"/>
</dbReference>
<dbReference type="SMR" id="Q9VF08"/>
<dbReference type="BioGRID" id="66991">
    <property type="interactions" value="8"/>
</dbReference>
<dbReference type="FunCoup" id="Q9VF08">
    <property type="interactions" value="729"/>
</dbReference>
<dbReference type="IntAct" id="Q9VF08">
    <property type="interactions" value="7"/>
</dbReference>
<dbReference type="STRING" id="7227.FBpp0311409"/>
<dbReference type="PaxDb" id="7227-FBpp0082657"/>
<dbReference type="DNASU" id="41937"/>
<dbReference type="EnsemblMetazoa" id="FBtr0083203">
    <property type="protein sequence ID" value="FBpp0082657"/>
    <property type="gene ID" value="FBgn0038387"/>
</dbReference>
<dbReference type="EnsemblMetazoa" id="FBtr0345214">
    <property type="protein sequence ID" value="FBpp0311409"/>
    <property type="gene ID" value="FBgn0038387"/>
</dbReference>
<dbReference type="GeneID" id="41937"/>
<dbReference type="KEGG" id="dme:Dmel_CG5268"/>
<dbReference type="AGR" id="FB:FBgn0038387"/>
<dbReference type="CTD" id="41937"/>
<dbReference type="FlyBase" id="FBgn0038387">
    <property type="gene designation" value="blp"/>
</dbReference>
<dbReference type="VEuPathDB" id="VectorBase:FBgn0038387"/>
<dbReference type="eggNOG" id="KOG3442">
    <property type="taxonomic scope" value="Eukaryota"/>
</dbReference>
<dbReference type="GeneTree" id="ENSGT00390000012037"/>
<dbReference type="HOGENOM" id="CLU_101461_3_0_1"/>
<dbReference type="InParanoid" id="Q9VF08"/>
<dbReference type="OMA" id="AKYLIQI"/>
<dbReference type="OrthoDB" id="10262892at2759"/>
<dbReference type="PhylomeDB" id="Q9VF08"/>
<dbReference type="BioGRID-ORCS" id="41937">
    <property type="hits" value="0 hits in 1 CRISPR screen"/>
</dbReference>
<dbReference type="ChiTaRS" id="Baldspot">
    <property type="organism name" value="fly"/>
</dbReference>
<dbReference type="GenomeRNAi" id="41937"/>
<dbReference type="PRO" id="PR:Q9VF08"/>
<dbReference type="Proteomes" id="UP000000803">
    <property type="component" value="Chromosome 3R"/>
</dbReference>
<dbReference type="Bgee" id="FBgn0038387">
    <property type="expression patterns" value="Expressed in mid-late elongation-stage spermatid (Drosophila) in testis and 118 other cell types or tissues"/>
</dbReference>
<dbReference type="ExpressionAtlas" id="Q9VF08">
    <property type="expression patterns" value="baseline and differential"/>
</dbReference>
<dbReference type="GO" id="GO:0005744">
    <property type="term" value="C:TIM23 mitochondrial import inner membrane translocase complex"/>
    <property type="evidence" value="ECO:0000318"/>
    <property type="project" value="GO_Central"/>
</dbReference>
<dbReference type="GO" id="GO:0002168">
    <property type="term" value="P:instar larval development"/>
    <property type="evidence" value="ECO:0000315"/>
    <property type="project" value="FlyBase"/>
</dbReference>
<dbReference type="GO" id="GO:0030150">
    <property type="term" value="P:protein import into mitochondrial matrix"/>
    <property type="evidence" value="ECO:0000318"/>
    <property type="project" value="GO_Central"/>
</dbReference>
<dbReference type="FunFam" id="1.10.287.110:FF:000006">
    <property type="entry name" value="Import inner membrane translocase subunit TIM16"/>
    <property type="match status" value="1"/>
</dbReference>
<dbReference type="Gene3D" id="1.10.287.110">
    <property type="entry name" value="DnaJ domain"/>
    <property type="match status" value="1"/>
</dbReference>
<dbReference type="InterPro" id="IPR036869">
    <property type="entry name" value="J_dom_sf"/>
</dbReference>
<dbReference type="InterPro" id="IPR005341">
    <property type="entry name" value="Tim16"/>
</dbReference>
<dbReference type="PANTHER" id="PTHR12388">
    <property type="entry name" value="MITOCHONDRIA ASSOCIATED GRANULOCYTE MACROPHAGE CSF SIGNALING MOLECULE"/>
    <property type="match status" value="1"/>
</dbReference>
<dbReference type="PANTHER" id="PTHR12388:SF0">
    <property type="entry name" value="MITOCHONDRIAL IMPORT INNER MEMBRANE TRANSLOCASE SUBUNIT TIM16"/>
    <property type="match status" value="1"/>
</dbReference>
<dbReference type="Pfam" id="PF03656">
    <property type="entry name" value="Pam16"/>
    <property type="match status" value="1"/>
</dbReference>